<gene>
    <name type="primary">tmcB</name>
    <name type="synonym">GEG04</name>
    <name type="ORF">DDB_G0289207</name>
</gene>
<feature type="chain" id="PRO_0000383598" description="Tiny macrocysts protein B">
    <location>
        <begin position="1"/>
        <end position="1416"/>
    </location>
</feature>
<feature type="transmembrane region" description="Helical" evidence="1">
    <location>
        <begin position="47"/>
        <end position="67"/>
    </location>
</feature>
<feature type="transmembrane region" description="Helical" evidence="1">
    <location>
        <begin position="93"/>
        <end position="113"/>
    </location>
</feature>
<feature type="transmembrane region" description="Helical" evidence="1">
    <location>
        <begin position="140"/>
        <end position="160"/>
    </location>
</feature>
<feature type="transmembrane region" description="Helical" evidence="1">
    <location>
        <begin position="185"/>
        <end position="205"/>
    </location>
</feature>
<feature type="transmembrane region" description="Helical" evidence="1">
    <location>
        <begin position="231"/>
        <end position="251"/>
    </location>
</feature>
<feature type="transmembrane region" description="Helical" evidence="1">
    <location>
        <begin position="253"/>
        <end position="273"/>
    </location>
</feature>
<feature type="transmembrane region" description="Helical" evidence="1">
    <location>
        <begin position="285"/>
        <end position="305"/>
    </location>
</feature>
<feature type="transmembrane region" description="Helical" evidence="1">
    <location>
        <begin position="315"/>
        <end position="335"/>
    </location>
</feature>
<feature type="transmembrane region" description="Helical" evidence="1">
    <location>
        <begin position="706"/>
        <end position="726"/>
    </location>
</feature>
<feature type="transmembrane region" description="Helical" evidence="1">
    <location>
        <begin position="953"/>
        <end position="973"/>
    </location>
</feature>
<feature type="transmembrane region" description="Helical" evidence="1">
    <location>
        <begin position="1179"/>
        <end position="1199"/>
    </location>
</feature>
<feature type="transmembrane region" description="Helical" evidence="1">
    <location>
        <begin position="1325"/>
        <end position="1345"/>
    </location>
</feature>
<feature type="transmembrane region" description="Helical" evidence="1">
    <location>
        <begin position="1358"/>
        <end position="1378"/>
    </location>
</feature>
<feature type="region of interest" description="Disordered" evidence="2">
    <location>
        <begin position="356"/>
        <end position="377"/>
    </location>
</feature>
<feature type="region of interest" description="Disordered" evidence="2">
    <location>
        <begin position="662"/>
        <end position="691"/>
    </location>
</feature>
<feature type="region of interest" description="Disordered" evidence="2">
    <location>
        <begin position="1018"/>
        <end position="1103"/>
    </location>
</feature>
<feature type="region of interest" description="Disordered" evidence="2">
    <location>
        <begin position="1119"/>
        <end position="1144"/>
    </location>
</feature>
<feature type="compositionally biased region" description="Basic and acidic residues" evidence="2">
    <location>
        <begin position="356"/>
        <end position="372"/>
    </location>
</feature>
<feature type="compositionally biased region" description="Acidic residues" evidence="2">
    <location>
        <begin position="1024"/>
        <end position="1039"/>
    </location>
</feature>
<feature type="compositionally biased region" description="Low complexity" evidence="2">
    <location>
        <begin position="1048"/>
        <end position="1062"/>
    </location>
</feature>
<feature type="compositionally biased region" description="Low complexity" evidence="2">
    <location>
        <begin position="1083"/>
        <end position="1094"/>
    </location>
</feature>
<feature type="compositionally biased region" description="Basic and acidic residues" evidence="2">
    <location>
        <begin position="1123"/>
        <end position="1144"/>
    </location>
</feature>
<accession>Q5FBC3</accession>
<accession>Q54HV2</accession>
<sequence length="1416" mass="159969">MSSTKSGSSKYSSGSSISLIMGFSRSLEKGSFGVLYAMIKGNTFPRILTILSMLIEFCQLSSFGFKHQYPWGGDAGYYLKRIMSPVSHPSDVFGYLGFTILFWIAVGLLILGFLNIWYVAYQFYRGKIANIWIIRTLRWFVSFSVAVLFIPIISLLLIGLDCEGSSEGTILRKFDNETIQCFRGANLPIAVISIILIVVFSIVAFTSSATYYEYDTNVKSRFSKPHARFDVTVLFAKFVFAFFNSLVDFVPWLTSITFFVFMVILTFGSIIVLPYNNQRLNQVRSGFYTVVLWVSFMTLVTMGINDETSPATCYITIVGVFFAFPIGFFSNMFYFKWLSSKVSDIQILNQSPSMDLKDANKKGKRNSVEKESSPTSKVTWGKQPITLGSKRQIIFPFFKKKFVMSFFVEIMARSILNNNNEGVSSSSNESIERANNLYQCGLQYFPNSDLLWMAYCNFLFTVRKDRHIGYAALEKLRRMKPSFDVRFFIYQRDKEREQIMDSDLRGPEHTGKIQDFVSYMEFKKLYYGAKRHHVKCLNYIKRFWGHLLHETVDLHRLSDLSGRIATTENKANESYERLLALNPNSVRVLRDYSQFLEEVVKDKESSYKLQKKAEAIEDIMSKSQTTDFKISDIKAIDSDEDDIEKTLQEPTAIQLAKIDADIEKSGSKSGSSKSKDDSSESSSSSKGRRGKYKEFQQSNAINKLSWLMIGTTCCCIIFLIVVLVVFRGLEVKHTNAYQGIISITDCANEAVQMGMHLNAMQAYALVAGVGNNTVEASLIEIARRRALVKRGIIIMKNIHDAIYWGEGNPVSYVGDNLSQLKARDGYDIFDIGSVIFTFDQFNRSSTLLDNKQMIELYSQPSVNMSVLVAPPGSNTTSLYTQTYNAWKAGNAFIESAMLASDVTFDELRYSVNQNPNFKFVTINAPVIMPDIYNKVQTAYIDSLVSDITGTLDAILYTWCGIFAVLFLICAVLFRPIVRKISREKIRTLVLFSLAPKDVVVKLSTKKIKMVSLDSGSERDNLFDTTDDDGRDDHLGEDDNNIQTPVGDNNNNNNNNNNNNNNNGSISSNVTKSDGEIGSDGVRSSSGSNVLNTSSPYRDRRPLMDSTSVLASTATLNNRNVRLQAKDEEITNGGGERKGSDATRTALSEDKKYGWDGKSKRNLNKKSLKSILGRLHWSYILATFLLFGFITMGIWVTFTVVFNNSQSGYTLGKSCSRSLNSRVINYYVAELYTYSQYVSTQNMVDAITELQSSHQSLPYLEEVRPLMEGSYGCWALNKSTCLPPSSMYYEEVNSGLDRVVDSLAKKAINLAYTDQAALLDSPDLQWFLALIDYIFIGLDTATFTYFDYFLEKQEWANTVLTAILSVSCVILLVVHVVLFRPFMNHLRIQHIHTLALLRLAPDDIRYMEVSDKVIDED</sequence>
<proteinExistence type="evidence at transcript level"/>
<keyword id="KW-0472">Membrane</keyword>
<keyword id="KW-1185">Reference proteome</keyword>
<keyword id="KW-0812">Transmembrane</keyword>
<keyword id="KW-1133">Transmembrane helix</keyword>
<organism>
    <name type="scientific">Dictyostelium discoideum</name>
    <name type="common">Social amoeba</name>
    <dbReference type="NCBI Taxonomy" id="44689"/>
    <lineage>
        <taxon>Eukaryota</taxon>
        <taxon>Amoebozoa</taxon>
        <taxon>Evosea</taxon>
        <taxon>Eumycetozoa</taxon>
        <taxon>Dictyostelia</taxon>
        <taxon>Dictyosteliales</taxon>
        <taxon>Dictyosteliaceae</taxon>
        <taxon>Dictyostelium</taxon>
    </lineage>
</organism>
<evidence type="ECO:0000255" key="1"/>
<evidence type="ECO:0000256" key="2">
    <source>
        <dbReference type="SAM" id="MobiDB-lite"/>
    </source>
</evidence>
<evidence type="ECO:0000269" key="3">
    <source>
    </source>
</evidence>
<evidence type="ECO:0000305" key="4"/>
<comment type="function">
    <text evidence="3">Regulator of the cAMP signaling pathway specific to sexual development. Controls the levels of external cAMP by regulating the expression of phosphodiesterase pdsA and its inhibitor pdiA.</text>
</comment>
<comment type="subcellular location">
    <subcellularLocation>
        <location evidence="4">Membrane</location>
        <topology evidence="4">Multi-pass membrane protein</topology>
    </subcellularLocation>
</comment>
<comment type="developmental stage">
    <text evidence="3">Expression in fusion-competent cells is about 6 times higher than fusion-incompetent cells. Remains high until 8 hours of sexual development, and then slightly decreases. In the asexual development, the transcript level increases temporarily during the pre-aggregation stage (4 hours), and then returns to the basal level.</text>
</comment>
<comment type="disruption phenotype">
    <text evidence="3">Null cells produce tiny macrocysts and have increased numbers of peripheral cells during sexual development. Macrocyst formation by null cells is much less sensitive to the addition of exogenous cAMP compared to wild-type. The mRNA level of phosphodiesterase (pdsA) is higher and that of its inhibitor (pdiA) is lower in the null cells compared to wild-type during sexual development. The expression of regA, which regulates the intercellular cAMP signaling pathway is not affected. Null cells show less extensive cell aggregation toward the zygote giant cells and many cells remain around poorly formed macrocysts. The expression of the carA is unchanged or slightly higher in the null cells, while that of the carC is much reduced. Chemotaxis toward cAMP during asexual development is indistinguishable between the wild-type and null cells.</text>
</comment>
<reference key="1">
    <citation type="journal article" date="2005" name="Mech. Dev.">
        <title>Reverse genetic analyses of gamete-enriched genes revealed a novel regulator of the cAMP signaling pathway in Dictyostelium discoideum.</title>
        <authorList>
            <person name="Muramoto T."/>
            <person name="Takeda S."/>
            <person name="Furuya Y."/>
            <person name="Urushihara H."/>
        </authorList>
    </citation>
    <scope>NUCLEOTIDE SEQUENCE [MRNA]</scope>
    <scope>FUNCTION</scope>
    <scope>DISRUPTION PHENOTYPE</scope>
    <scope>DEVELOPMENTAL STAGE</scope>
    <source>
        <strain>AX3-1</strain>
    </source>
</reference>
<reference key="2">
    <citation type="journal article" date="2005" name="Nature">
        <title>The genome of the social amoeba Dictyostelium discoideum.</title>
        <authorList>
            <person name="Eichinger L."/>
            <person name="Pachebat J.A."/>
            <person name="Gloeckner G."/>
            <person name="Rajandream M.A."/>
            <person name="Sucgang R."/>
            <person name="Berriman M."/>
            <person name="Song J."/>
            <person name="Olsen R."/>
            <person name="Szafranski K."/>
            <person name="Xu Q."/>
            <person name="Tunggal B."/>
            <person name="Kummerfeld S."/>
            <person name="Madera M."/>
            <person name="Konfortov B.A."/>
            <person name="Rivero F."/>
            <person name="Bankier A.T."/>
            <person name="Lehmann R."/>
            <person name="Hamlin N."/>
            <person name="Davies R."/>
            <person name="Gaudet P."/>
            <person name="Fey P."/>
            <person name="Pilcher K."/>
            <person name="Chen G."/>
            <person name="Saunders D."/>
            <person name="Sodergren E.J."/>
            <person name="Davis P."/>
            <person name="Kerhornou A."/>
            <person name="Nie X."/>
            <person name="Hall N."/>
            <person name="Anjard C."/>
            <person name="Hemphill L."/>
            <person name="Bason N."/>
            <person name="Farbrother P."/>
            <person name="Desany B."/>
            <person name="Just E."/>
            <person name="Morio T."/>
            <person name="Rost R."/>
            <person name="Churcher C.M."/>
            <person name="Cooper J."/>
            <person name="Haydock S."/>
            <person name="van Driessche N."/>
            <person name="Cronin A."/>
            <person name="Goodhead I."/>
            <person name="Muzny D.M."/>
            <person name="Mourier T."/>
            <person name="Pain A."/>
            <person name="Lu M."/>
            <person name="Harper D."/>
            <person name="Lindsay R."/>
            <person name="Hauser H."/>
            <person name="James K.D."/>
            <person name="Quiles M."/>
            <person name="Madan Babu M."/>
            <person name="Saito T."/>
            <person name="Buchrieser C."/>
            <person name="Wardroper A."/>
            <person name="Felder M."/>
            <person name="Thangavelu M."/>
            <person name="Johnson D."/>
            <person name="Knights A."/>
            <person name="Loulseged H."/>
            <person name="Mungall K.L."/>
            <person name="Oliver K."/>
            <person name="Price C."/>
            <person name="Quail M.A."/>
            <person name="Urushihara H."/>
            <person name="Hernandez J."/>
            <person name="Rabbinowitsch E."/>
            <person name="Steffen D."/>
            <person name="Sanders M."/>
            <person name="Ma J."/>
            <person name="Kohara Y."/>
            <person name="Sharp S."/>
            <person name="Simmonds M.N."/>
            <person name="Spiegler S."/>
            <person name="Tivey A."/>
            <person name="Sugano S."/>
            <person name="White B."/>
            <person name="Walker D."/>
            <person name="Woodward J.R."/>
            <person name="Winckler T."/>
            <person name="Tanaka Y."/>
            <person name="Shaulsky G."/>
            <person name="Schleicher M."/>
            <person name="Weinstock G.M."/>
            <person name="Rosenthal A."/>
            <person name="Cox E.C."/>
            <person name="Chisholm R.L."/>
            <person name="Gibbs R.A."/>
            <person name="Loomis W.F."/>
            <person name="Platzer M."/>
            <person name="Kay R.R."/>
            <person name="Williams J.G."/>
            <person name="Dear P.H."/>
            <person name="Noegel A.A."/>
            <person name="Barrell B.G."/>
            <person name="Kuspa A."/>
        </authorList>
    </citation>
    <scope>NUCLEOTIDE SEQUENCE [LARGE SCALE GENOMIC DNA]</scope>
    <source>
        <strain>AX4</strain>
    </source>
</reference>
<reference key="3">
    <citation type="journal article" date="2003" name="Mech. Dev.">
        <title>Construction of a gamete-enriched gene pool and RNAi-mediated functional analysis in Dictyostelium discoideum.</title>
        <authorList>
            <person name="Muramoto T."/>
            <person name="Suzuki K."/>
            <person name="Shimizu H."/>
            <person name="Kohara Y."/>
            <person name="Kohriki E."/>
            <person name="Obara S."/>
            <person name="Tanaka Y."/>
            <person name="Urushihara H."/>
        </authorList>
    </citation>
    <scope>IDENTIFICATION</scope>
</reference>
<protein>
    <recommendedName>
        <fullName>Tiny macrocysts protein B</fullName>
    </recommendedName>
    <alternativeName>
        <fullName>Gamete enriched gene 04 protein</fullName>
    </alternativeName>
    <alternativeName>
        <fullName>cAMP pathway regulator tmcB</fullName>
    </alternativeName>
</protein>
<name>TMCB_DICDI</name>
<dbReference type="EMBL" id="AB187035">
    <property type="protein sequence ID" value="BAD89539.1"/>
    <property type="molecule type" value="mRNA"/>
</dbReference>
<dbReference type="EMBL" id="AAFI02000131">
    <property type="protein sequence ID" value="EAL62837.1"/>
    <property type="molecule type" value="Genomic_DNA"/>
</dbReference>
<dbReference type="RefSeq" id="XP_636337.1">
    <property type="nucleotide sequence ID" value="XM_631245.1"/>
</dbReference>
<dbReference type="FunCoup" id="Q5FBC3">
    <property type="interactions" value="3"/>
</dbReference>
<dbReference type="STRING" id="44689.Q5FBC3"/>
<dbReference type="PaxDb" id="44689-DDB0231826"/>
<dbReference type="EnsemblProtists" id="EAL62837">
    <property type="protein sequence ID" value="EAL62837"/>
    <property type="gene ID" value="DDB_G0289207"/>
</dbReference>
<dbReference type="GeneID" id="8627010"/>
<dbReference type="KEGG" id="ddi:DDB_G0289207"/>
<dbReference type="dictyBase" id="DDB_G0289207">
    <property type="gene designation" value="tmcB"/>
</dbReference>
<dbReference type="VEuPathDB" id="AmoebaDB:DDB_G0289207"/>
<dbReference type="eggNOG" id="ENOG502S3MF">
    <property type="taxonomic scope" value="Eukaryota"/>
</dbReference>
<dbReference type="HOGENOM" id="CLU_253378_0_0_1"/>
<dbReference type="InParanoid" id="Q5FBC3"/>
<dbReference type="OMA" id="YMEVSDK"/>
<dbReference type="PhylomeDB" id="Q5FBC3"/>
<dbReference type="PRO" id="PR:Q5FBC3"/>
<dbReference type="Proteomes" id="UP000002195">
    <property type="component" value="Chromosome 5"/>
</dbReference>
<dbReference type="GO" id="GO:0016020">
    <property type="term" value="C:membrane"/>
    <property type="evidence" value="ECO:0007669"/>
    <property type="project" value="UniProtKB-SubCell"/>
</dbReference>
<dbReference type="GO" id="GO:0019933">
    <property type="term" value="P:cAMP-mediated signaling"/>
    <property type="evidence" value="ECO:0000315"/>
    <property type="project" value="dictyBase"/>
</dbReference>
<dbReference type="GO" id="GO:0010468">
    <property type="term" value="P:regulation of gene expression"/>
    <property type="evidence" value="ECO:0000315"/>
    <property type="project" value="dictyBase"/>
</dbReference>
<dbReference type="GO" id="GO:0006396">
    <property type="term" value="P:RNA processing"/>
    <property type="evidence" value="ECO:0007669"/>
    <property type="project" value="InterPro"/>
</dbReference>
<dbReference type="Gene3D" id="1.25.40.10">
    <property type="entry name" value="Tetratricopeptide repeat domain"/>
    <property type="match status" value="1"/>
</dbReference>
<dbReference type="InterPro" id="IPR003107">
    <property type="entry name" value="HAT"/>
</dbReference>
<dbReference type="InterPro" id="IPR052994">
    <property type="entry name" value="Tiny_macrocysts_regulators"/>
</dbReference>
<dbReference type="InterPro" id="IPR011990">
    <property type="entry name" value="TPR-like_helical_dom_sf"/>
</dbReference>
<dbReference type="PANTHER" id="PTHR31600:SF2">
    <property type="entry name" value="GAMETE ENRICHED GENE 10 PROTEIN-RELATED"/>
    <property type="match status" value="1"/>
</dbReference>
<dbReference type="PANTHER" id="PTHR31600">
    <property type="entry name" value="TINY MACROCYSTS PROTEIN B-RELATED"/>
    <property type="match status" value="1"/>
</dbReference>
<dbReference type="Pfam" id="PF25474">
    <property type="entry name" value="TPR_TmcB"/>
    <property type="match status" value="1"/>
</dbReference>
<dbReference type="SMART" id="SM00386">
    <property type="entry name" value="HAT"/>
    <property type="match status" value="2"/>
</dbReference>